<protein>
    <recommendedName>
        <fullName evidence="1">4-hydroxy-tetrahydrodipicolinate reductase</fullName>
        <shortName evidence="1">HTPA reductase</shortName>
        <ecNumber evidence="1">1.17.1.8</ecNumber>
    </recommendedName>
</protein>
<dbReference type="EC" id="1.17.1.8" evidence="1"/>
<dbReference type="EMBL" id="CP000086">
    <property type="protein sequence ID" value="ABC36898.1"/>
    <property type="molecule type" value="Genomic_DNA"/>
</dbReference>
<dbReference type="PDB" id="4F3Y">
    <property type="method" value="X-ray"/>
    <property type="resolution" value="2.10 A"/>
    <property type="chains" value="A/B=1-268"/>
</dbReference>
<dbReference type="PDBsum" id="4F3Y"/>
<dbReference type="SMR" id="Q2SZ94"/>
<dbReference type="KEGG" id="bte:BTH_I1208"/>
<dbReference type="HOGENOM" id="CLU_047479_2_1_4"/>
<dbReference type="UniPathway" id="UPA00034">
    <property type="reaction ID" value="UER00018"/>
</dbReference>
<dbReference type="EvolutionaryTrace" id="Q2SZ94"/>
<dbReference type="Proteomes" id="UP000001930">
    <property type="component" value="Chromosome I"/>
</dbReference>
<dbReference type="GO" id="GO:0005829">
    <property type="term" value="C:cytosol"/>
    <property type="evidence" value="ECO:0007669"/>
    <property type="project" value="TreeGrafter"/>
</dbReference>
<dbReference type="GO" id="GO:0008839">
    <property type="term" value="F:4-hydroxy-tetrahydrodipicolinate reductase"/>
    <property type="evidence" value="ECO:0007669"/>
    <property type="project" value="UniProtKB-EC"/>
</dbReference>
<dbReference type="GO" id="GO:0051287">
    <property type="term" value="F:NAD binding"/>
    <property type="evidence" value="ECO:0007669"/>
    <property type="project" value="UniProtKB-UniRule"/>
</dbReference>
<dbReference type="GO" id="GO:0050661">
    <property type="term" value="F:NADP binding"/>
    <property type="evidence" value="ECO:0007669"/>
    <property type="project" value="UniProtKB-UniRule"/>
</dbReference>
<dbReference type="GO" id="GO:0016726">
    <property type="term" value="F:oxidoreductase activity, acting on CH or CH2 groups, NAD or NADP as acceptor"/>
    <property type="evidence" value="ECO:0007669"/>
    <property type="project" value="UniProtKB-UniRule"/>
</dbReference>
<dbReference type="GO" id="GO:0019877">
    <property type="term" value="P:diaminopimelate biosynthetic process"/>
    <property type="evidence" value="ECO:0007669"/>
    <property type="project" value="UniProtKB-UniRule"/>
</dbReference>
<dbReference type="GO" id="GO:0009089">
    <property type="term" value="P:lysine biosynthetic process via diaminopimelate"/>
    <property type="evidence" value="ECO:0007669"/>
    <property type="project" value="UniProtKB-UniRule"/>
</dbReference>
<dbReference type="CDD" id="cd02274">
    <property type="entry name" value="DHDPR_N"/>
    <property type="match status" value="1"/>
</dbReference>
<dbReference type="FunFam" id="3.30.360.10:FF:000004">
    <property type="entry name" value="4-hydroxy-tetrahydrodipicolinate reductase"/>
    <property type="match status" value="1"/>
</dbReference>
<dbReference type="FunFam" id="3.40.50.720:FF:000048">
    <property type="entry name" value="4-hydroxy-tetrahydrodipicolinate reductase"/>
    <property type="match status" value="1"/>
</dbReference>
<dbReference type="Gene3D" id="3.30.360.10">
    <property type="entry name" value="Dihydrodipicolinate Reductase, domain 2"/>
    <property type="match status" value="1"/>
</dbReference>
<dbReference type="Gene3D" id="3.40.50.720">
    <property type="entry name" value="NAD(P)-binding Rossmann-like Domain"/>
    <property type="match status" value="1"/>
</dbReference>
<dbReference type="HAMAP" id="MF_00102">
    <property type="entry name" value="DapB"/>
    <property type="match status" value="1"/>
</dbReference>
<dbReference type="InterPro" id="IPR022663">
    <property type="entry name" value="DapB_C"/>
</dbReference>
<dbReference type="InterPro" id="IPR000846">
    <property type="entry name" value="DapB_N"/>
</dbReference>
<dbReference type="InterPro" id="IPR022664">
    <property type="entry name" value="DapB_N_CS"/>
</dbReference>
<dbReference type="InterPro" id="IPR023940">
    <property type="entry name" value="DHDPR_bac"/>
</dbReference>
<dbReference type="InterPro" id="IPR036291">
    <property type="entry name" value="NAD(P)-bd_dom_sf"/>
</dbReference>
<dbReference type="NCBIfam" id="TIGR00036">
    <property type="entry name" value="dapB"/>
    <property type="match status" value="1"/>
</dbReference>
<dbReference type="PANTHER" id="PTHR20836:SF0">
    <property type="entry name" value="4-HYDROXY-TETRAHYDRODIPICOLINATE REDUCTASE 1, CHLOROPLASTIC-RELATED"/>
    <property type="match status" value="1"/>
</dbReference>
<dbReference type="PANTHER" id="PTHR20836">
    <property type="entry name" value="DIHYDRODIPICOLINATE REDUCTASE"/>
    <property type="match status" value="1"/>
</dbReference>
<dbReference type="Pfam" id="PF05173">
    <property type="entry name" value="DapB_C"/>
    <property type="match status" value="1"/>
</dbReference>
<dbReference type="Pfam" id="PF01113">
    <property type="entry name" value="DapB_N"/>
    <property type="match status" value="1"/>
</dbReference>
<dbReference type="PIRSF" id="PIRSF000161">
    <property type="entry name" value="DHPR"/>
    <property type="match status" value="1"/>
</dbReference>
<dbReference type="SUPFAM" id="SSF55347">
    <property type="entry name" value="Glyceraldehyde-3-phosphate dehydrogenase-like, C-terminal domain"/>
    <property type="match status" value="1"/>
</dbReference>
<dbReference type="SUPFAM" id="SSF51735">
    <property type="entry name" value="NAD(P)-binding Rossmann-fold domains"/>
    <property type="match status" value="1"/>
</dbReference>
<dbReference type="PROSITE" id="PS01298">
    <property type="entry name" value="DAPB"/>
    <property type="match status" value="1"/>
</dbReference>
<keyword id="KW-0002">3D-structure</keyword>
<keyword id="KW-0028">Amino-acid biosynthesis</keyword>
<keyword id="KW-0963">Cytoplasm</keyword>
<keyword id="KW-0220">Diaminopimelate biosynthesis</keyword>
<keyword id="KW-0457">Lysine biosynthesis</keyword>
<keyword id="KW-0520">NAD</keyword>
<keyword id="KW-0521">NADP</keyword>
<keyword id="KW-0560">Oxidoreductase</keyword>
<proteinExistence type="evidence at protein level"/>
<name>DAPB_BURTA</name>
<sequence>MSSMKIAIAGASGRMGRMLIEAVLAAPDATLVGALDRTGSPQLGQDAGAFLGKQTGVALTDDIERVCAEADYLIDFTLPEGTLVHLDAALRHDVKLVIGTTGFSEPQKAQLRAAGEKIALVFSANMSVGVNVTMKLLEFAAKQFAQGYDIEIIEAHHRHKVDAPSGTALMMGETIAAATGRSLDDCAVYGRHGVTGERDPSTIGFSAIRGGDIVGDHTVLFAGIGERIEITHKSASRVSYAQGALRAARFLAGRDAGFFDMQDVLGLR</sequence>
<comment type="function">
    <text evidence="1">Catalyzes the conversion of 4-hydroxy-tetrahydrodipicolinate (HTPA) to tetrahydrodipicolinate.</text>
</comment>
<comment type="catalytic activity">
    <reaction evidence="1">
        <text>(S)-2,3,4,5-tetrahydrodipicolinate + NAD(+) + H2O = (2S,4S)-4-hydroxy-2,3,4,5-tetrahydrodipicolinate + NADH + H(+)</text>
        <dbReference type="Rhea" id="RHEA:35323"/>
        <dbReference type="ChEBI" id="CHEBI:15377"/>
        <dbReference type="ChEBI" id="CHEBI:15378"/>
        <dbReference type="ChEBI" id="CHEBI:16845"/>
        <dbReference type="ChEBI" id="CHEBI:57540"/>
        <dbReference type="ChEBI" id="CHEBI:57945"/>
        <dbReference type="ChEBI" id="CHEBI:67139"/>
        <dbReference type="EC" id="1.17.1.8"/>
    </reaction>
</comment>
<comment type="catalytic activity">
    <reaction evidence="1">
        <text>(S)-2,3,4,5-tetrahydrodipicolinate + NADP(+) + H2O = (2S,4S)-4-hydroxy-2,3,4,5-tetrahydrodipicolinate + NADPH + H(+)</text>
        <dbReference type="Rhea" id="RHEA:35331"/>
        <dbReference type="ChEBI" id="CHEBI:15377"/>
        <dbReference type="ChEBI" id="CHEBI:15378"/>
        <dbReference type="ChEBI" id="CHEBI:16845"/>
        <dbReference type="ChEBI" id="CHEBI:57783"/>
        <dbReference type="ChEBI" id="CHEBI:58349"/>
        <dbReference type="ChEBI" id="CHEBI:67139"/>
        <dbReference type="EC" id="1.17.1.8"/>
    </reaction>
</comment>
<comment type="pathway">
    <text evidence="1">Amino-acid biosynthesis; L-lysine biosynthesis via DAP pathway; (S)-tetrahydrodipicolinate from L-aspartate: step 4/4.</text>
</comment>
<comment type="subcellular location">
    <subcellularLocation>
        <location evidence="1">Cytoplasm</location>
    </subcellularLocation>
</comment>
<comment type="similarity">
    <text evidence="1">Belongs to the DapB family.</text>
</comment>
<comment type="caution">
    <text evidence="2">Was originally thought to be a dihydrodipicolinate reductase (DHDPR), catalyzing the conversion of dihydrodipicolinate to tetrahydrodipicolinate. However, it was shown in E.coli that the substrate of the enzymatic reaction is not dihydrodipicolinate (DHDP) but in fact (2S,4S)-4-hydroxy-2,3,4,5-tetrahydrodipicolinic acid (HTPA), the product released by the DapA-catalyzed reaction.</text>
</comment>
<organism>
    <name type="scientific">Burkholderia thailandensis (strain ATCC 700388 / DSM 13276 / CCUG 48851 / CIP 106301 / E264)</name>
    <dbReference type="NCBI Taxonomy" id="271848"/>
    <lineage>
        <taxon>Bacteria</taxon>
        <taxon>Pseudomonadati</taxon>
        <taxon>Pseudomonadota</taxon>
        <taxon>Betaproteobacteria</taxon>
        <taxon>Burkholderiales</taxon>
        <taxon>Burkholderiaceae</taxon>
        <taxon>Burkholderia</taxon>
        <taxon>pseudomallei group</taxon>
    </lineage>
</organism>
<reference key="1">
    <citation type="journal article" date="2005" name="BMC Genomics">
        <title>Bacterial genome adaptation to niches: divergence of the potential virulence genes in three Burkholderia species of different survival strategies.</title>
        <authorList>
            <person name="Kim H.S."/>
            <person name="Schell M.A."/>
            <person name="Yu Y."/>
            <person name="Ulrich R.L."/>
            <person name="Sarria S.H."/>
            <person name="Nierman W.C."/>
            <person name="DeShazer D."/>
        </authorList>
    </citation>
    <scope>NUCLEOTIDE SEQUENCE [LARGE SCALE GENOMIC DNA]</scope>
    <source>
        <strain>ATCC 700388 / DSM 13276 / CCUG 48851 / CIP 106301 / E264</strain>
    </source>
</reference>
<gene>
    <name evidence="1" type="primary">dapB</name>
    <name type="ordered locus">BTH_I1208</name>
</gene>
<evidence type="ECO:0000255" key="1">
    <source>
        <dbReference type="HAMAP-Rule" id="MF_00102"/>
    </source>
</evidence>
<evidence type="ECO:0000305" key="2"/>
<evidence type="ECO:0007829" key="3">
    <source>
        <dbReference type="PDB" id="4F3Y"/>
    </source>
</evidence>
<feature type="chain" id="PRO_1000008547" description="4-hydroxy-tetrahydrodipicolinate reductase">
    <location>
        <begin position="1"/>
        <end position="268"/>
    </location>
</feature>
<feature type="active site" description="Proton donor/acceptor" evidence="1">
    <location>
        <position position="156"/>
    </location>
</feature>
<feature type="active site" description="Proton donor" evidence="1">
    <location>
        <position position="160"/>
    </location>
</feature>
<feature type="binding site" evidence="1">
    <location>
        <begin position="10"/>
        <end position="15"/>
    </location>
    <ligand>
        <name>NAD(+)</name>
        <dbReference type="ChEBI" id="CHEBI:57540"/>
    </ligand>
</feature>
<feature type="binding site" evidence="1">
    <location>
        <position position="36"/>
    </location>
    <ligand>
        <name>NAD(+)</name>
        <dbReference type="ChEBI" id="CHEBI:57540"/>
    </ligand>
</feature>
<feature type="binding site" evidence="1">
    <location>
        <position position="37"/>
    </location>
    <ligand>
        <name>NADP(+)</name>
        <dbReference type="ChEBI" id="CHEBI:58349"/>
    </ligand>
</feature>
<feature type="binding site" evidence="1">
    <location>
        <begin position="99"/>
        <end position="101"/>
    </location>
    <ligand>
        <name>NAD(+)</name>
        <dbReference type="ChEBI" id="CHEBI:57540"/>
    </ligand>
</feature>
<feature type="binding site" evidence="1">
    <location>
        <begin position="123"/>
        <end position="126"/>
    </location>
    <ligand>
        <name>NAD(+)</name>
        <dbReference type="ChEBI" id="CHEBI:57540"/>
    </ligand>
</feature>
<feature type="binding site" evidence="1">
    <location>
        <position position="157"/>
    </location>
    <ligand>
        <name>(S)-2,3,4,5-tetrahydrodipicolinate</name>
        <dbReference type="ChEBI" id="CHEBI:16845"/>
    </ligand>
</feature>
<feature type="binding site" evidence="1">
    <location>
        <begin position="166"/>
        <end position="167"/>
    </location>
    <ligand>
        <name>(S)-2,3,4,5-tetrahydrodipicolinate</name>
        <dbReference type="ChEBI" id="CHEBI:16845"/>
    </ligand>
</feature>
<feature type="strand" evidence="3">
    <location>
        <begin position="4"/>
        <end position="10"/>
    </location>
</feature>
<feature type="helix" evidence="3">
    <location>
        <begin position="14"/>
        <end position="25"/>
    </location>
</feature>
<feature type="strand" evidence="3">
    <location>
        <begin position="29"/>
        <end position="35"/>
    </location>
</feature>
<feature type="turn" evidence="3">
    <location>
        <begin position="41"/>
        <end position="44"/>
    </location>
</feature>
<feature type="turn" evidence="3">
    <location>
        <begin position="47"/>
        <end position="52"/>
    </location>
</feature>
<feature type="helix" evidence="3">
    <location>
        <begin position="63"/>
        <end position="69"/>
    </location>
</feature>
<feature type="strand" evidence="3">
    <location>
        <begin position="71"/>
        <end position="75"/>
    </location>
</feature>
<feature type="helix" evidence="3">
    <location>
        <begin position="79"/>
        <end position="92"/>
    </location>
</feature>
<feature type="strand" evidence="3">
    <location>
        <begin position="95"/>
        <end position="98"/>
    </location>
</feature>
<feature type="helix" evidence="3">
    <location>
        <begin position="105"/>
        <end position="114"/>
    </location>
</feature>
<feature type="turn" evidence="3">
    <location>
        <begin position="115"/>
        <end position="117"/>
    </location>
</feature>
<feature type="strand" evidence="3">
    <location>
        <begin position="118"/>
        <end position="122"/>
    </location>
</feature>
<feature type="helix" evidence="3">
    <location>
        <begin position="128"/>
        <end position="143"/>
    </location>
</feature>
<feature type="strand" evidence="3">
    <location>
        <begin position="145"/>
        <end position="147"/>
    </location>
</feature>
<feature type="strand" evidence="3">
    <location>
        <begin position="149"/>
        <end position="156"/>
    </location>
</feature>
<feature type="strand" evidence="3">
    <location>
        <begin position="162"/>
        <end position="164"/>
    </location>
</feature>
<feature type="helix" evidence="3">
    <location>
        <begin position="166"/>
        <end position="177"/>
    </location>
</feature>
<feature type="turn" evidence="3">
    <location>
        <begin position="178"/>
        <end position="180"/>
    </location>
</feature>
<feature type="helix" evidence="3">
    <location>
        <begin position="183"/>
        <end position="186"/>
    </location>
</feature>
<feature type="strand" evidence="3">
    <location>
        <begin position="187"/>
        <end position="189"/>
    </location>
</feature>
<feature type="strand" evidence="3">
    <location>
        <begin position="203"/>
        <end position="209"/>
    </location>
</feature>
<feature type="strand" evidence="3">
    <location>
        <begin position="215"/>
        <end position="222"/>
    </location>
</feature>
<feature type="strand" evidence="3">
    <location>
        <begin position="224"/>
        <end position="234"/>
    </location>
</feature>
<feature type="helix" evidence="3">
    <location>
        <begin position="238"/>
        <end position="252"/>
    </location>
</feature>
<feature type="strand" evidence="3">
    <location>
        <begin position="255"/>
        <end position="259"/>
    </location>
</feature>
<feature type="helix" evidence="3">
    <location>
        <begin position="261"/>
        <end position="264"/>
    </location>
</feature>
<accession>Q2SZ94</accession>